<evidence type="ECO:0000255" key="1">
    <source>
        <dbReference type="HAMAP-Rule" id="MF_00572"/>
    </source>
</evidence>
<sequence length="575" mass="63650">MLTDPSQKYRAIAPVDLPDRRWPSRTLRQAPTWLSTDLRDGNQALFEPMNRERKLRLFHELVRIGFKEIEVGFPAASRIDFETVRHLIDEHLIPDDVTPMVMTQLRADLITETVKSVAGARRVIVHFYNAIAPAWREIVFGMSVPQIITLVEDHIALFRRLTAVHPETEWILQYSPETFCMAELEVSLEVCNAAIRAWDAGPRRRMIINLPTTVEVSTPNVFADQIEWMDRRLERREHLILSVHPHNDRGTAVACAEQAMLAGAQRVEGCLFGNGERSGNVDVVTLALNLYTQGIAPGLDFSDIAALARVAEECTALPIHPRHPYVGDLVFTAFSGSHQDAIAKGFAAQRPDAPWRVPYLPIDPTDLGRTYDSIVRVNSQSGKGGIAFLLQRDHHITMPRRMQVEFSAIVQALADASETELTSEHLWDVFERTYLAPVQASPDFSDRTSLAPALEQRRFIYRSHCLHPHPDGERIVLELADTEGNVRTVEGSGNGPIAATVAALGLALRIDSYEERSLGVGVGADAQALAIVEAALPTVPGSRFGVGRHENITTASIMAVLSAASRFAGEEQGKG</sequence>
<feature type="chain" id="PRO_0000406875" description="2-isopropylmalate synthase">
    <location>
        <begin position="1"/>
        <end position="575"/>
    </location>
</feature>
<feature type="domain" description="Pyruvate carboxyltransferase" evidence="1">
    <location>
        <begin position="31"/>
        <end position="305"/>
    </location>
</feature>
<feature type="region of interest" description="Regulatory domain" evidence="1">
    <location>
        <begin position="437"/>
        <end position="575"/>
    </location>
</feature>
<feature type="binding site" evidence="1">
    <location>
        <position position="40"/>
    </location>
    <ligand>
        <name>Mg(2+)</name>
        <dbReference type="ChEBI" id="CHEBI:18420"/>
    </ligand>
</feature>
<feature type="binding site" evidence="1">
    <location>
        <position position="244"/>
    </location>
    <ligand>
        <name>Mg(2+)</name>
        <dbReference type="ChEBI" id="CHEBI:18420"/>
    </ligand>
</feature>
<feature type="binding site" evidence="1">
    <location>
        <position position="246"/>
    </location>
    <ligand>
        <name>Mg(2+)</name>
        <dbReference type="ChEBI" id="CHEBI:18420"/>
    </ligand>
</feature>
<feature type="binding site" evidence="1">
    <location>
        <position position="280"/>
    </location>
    <ligand>
        <name>Mg(2+)</name>
        <dbReference type="ChEBI" id="CHEBI:18420"/>
    </ligand>
</feature>
<accession>D8J0Q1</accession>
<keyword id="KW-0028">Amino-acid biosynthesis</keyword>
<keyword id="KW-0100">Branched-chain amino acid biosynthesis</keyword>
<keyword id="KW-0963">Cytoplasm</keyword>
<keyword id="KW-0432">Leucine biosynthesis</keyword>
<keyword id="KW-0460">Magnesium</keyword>
<keyword id="KW-0479">Metal-binding</keyword>
<keyword id="KW-1185">Reference proteome</keyword>
<keyword id="KW-0808">Transferase</keyword>
<organism>
    <name type="scientific">Herbaspirillum seropedicae (strain SmR1)</name>
    <dbReference type="NCBI Taxonomy" id="757424"/>
    <lineage>
        <taxon>Bacteria</taxon>
        <taxon>Pseudomonadati</taxon>
        <taxon>Pseudomonadota</taxon>
        <taxon>Betaproteobacteria</taxon>
        <taxon>Burkholderiales</taxon>
        <taxon>Oxalobacteraceae</taxon>
        <taxon>Herbaspirillum</taxon>
    </lineage>
</organism>
<gene>
    <name evidence="1" type="primary">leuA</name>
    <name type="ordered locus">Hsero_0939</name>
</gene>
<comment type="function">
    <text evidence="1">Catalyzes the condensation of the acetyl group of acetyl-CoA with 3-methyl-2-oxobutanoate (2-ketoisovalerate) to form 3-carboxy-3-hydroxy-4-methylpentanoate (2-isopropylmalate).</text>
</comment>
<comment type="catalytic activity">
    <reaction evidence="1">
        <text>3-methyl-2-oxobutanoate + acetyl-CoA + H2O = (2S)-2-isopropylmalate + CoA + H(+)</text>
        <dbReference type="Rhea" id="RHEA:21524"/>
        <dbReference type="ChEBI" id="CHEBI:1178"/>
        <dbReference type="ChEBI" id="CHEBI:11851"/>
        <dbReference type="ChEBI" id="CHEBI:15377"/>
        <dbReference type="ChEBI" id="CHEBI:15378"/>
        <dbReference type="ChEBI" id="CHEBI:57287"/>
        <dbReference type="ChEBI" id="CHEBI:57288"/>
        <dbReference type="EC" id="2.3.3.13"/>
    </reaction>
</comment>
<comment type="cofactor">
    <cofactor evidence="1">
        <name>Mg(2+)</name>
        <dbReference type="ChEBI" id="CHEBI:18420"/>
    </cofactor>
</comment>
<comment type="pathway">
    <text evidence="1">Amino-acid biosynthesis; L-leucine biosynthesis; L-leucine from 3-methyl-2-oxobutanoate: step 1/4.</text>
</comment>
<comment type="subunit">
    <text evidence="1">Homodimer.</text>
</comment>
<comment type="subcellular location">
    <subcellularLocation>
        <location evidence="1">Cytoplasm</location>
    </subcellularLocation>
</comment>
<comment type="similarity">
    <text evidence="1">Belongs to the alpha-IPM synthase/homocitrate synthase family. LeuA type 2 subfamily.</text>
</comment>
<dbReference type="EC" id="2.3.3.13" evidence="1"/>
<dbReference type="EMBL" id="CP002039">
    <property type="protein sequence ID" value="ADJ62456.1"/>
    <property type="molecule type" value="Genomic_DNA"/>
</dbReference>
<dbReference type="RefSeq" id="WP_013232970.1">
    <property type="nucleotide sequence ID" value="NC_014323.1"/>
</dbReference>
<dbReference type="SMR" id="D8J0Q1"/>
<dbReference type="STRING" id="757424.Hsero_0939"/>
<dbReference type="GeneID" id="29392683"/>
<dbReference type="KEGG" id="hse:Hsero_0939"/>
<dbReference type="eggNOG" id="COG0119">
    <property type="taxonomic scope" value="Bacteria"/>
</dbReference>
<dbReference type="HOGENOM" id="CLU_004588_3_0_4"/>
<dbReference type="OrthoDB" id="9803573at2"/>
<dbReference type="UniPathway" id="UPA00048">
    <property type="reaction ID" value="UER00070"/>
</dbReference>
<dbReference type="Proteomes" id="UP000000329">
    <property type="component" value="Chromosome"/>
</dbReference>
<dbReference type="GO" id="GO:0005737">
    <property type="term" value="C:cytoplasm"/>
    <property type="evidence" value="ECO:0007669"/>
    <property type="project" value="UniProtKB-SubCell"/>
</dbReference>
<dbReference type="GO" id="GO:0003852">
    <property type="term" value="F:2-isopropylmalate synthase activity"/>
    <property type="evidence" value="ECO:0007669"/>
    <property type="project" value="UniProtKB-UniRule"/>
</dbReference>
<dbReference type="GO" id="GO:0003985">
    <property type="term" value="F:acetyl-CoA C-acetyltransferase activity"/>
    <property type="evidence" value="ECO:0007669"/>
    <property type="project" value="UniProtKB-UniRule"/>
</dbReference>
<dbReference type="GO" id="GO:0000287">
    <property type="term" value="F:magnesium ion binding"/>
    <property type="evidence" value="ECO:0007669"/>
    <property type="project" value="UniProtKB-UniRule"/>
</dbReference>
<dbReference type="GO" id="GO:0009098">
    <property type="term" value="P:L-leucine biosynthetic process"/>
    <property type="evidence" value="ECO:0007669"/>
    <property type="project" value="UniProtKB-UniRule"/>
</dbReference>
<dbReference type="CDD" id="cd07942">
    <property type="entry name" value="DRE_TIM_LeuA"/>
    <property type="match status" value="1"/>
</dbReference>
<dbReference type="Gene3D" id="3.30.160.270">
    <property type="match status" value="1"/>
</dbReference>
<dbReference type="Gene3D" id="3.20.20.70">
    <property type="entry name" value="Aldolase class I"/>
    <property type="match status" value="1"/>
</dbReference>
<dbReference type="HAMAP" id="MF_00572">
    <property type="entry name" value="LeuA_type2"/>
    <property type="match status" value="1"/>
</dbReference>
<dbReference type="InterPro" id="IPR013709">
    <property type="entry name" value="2-isopropylmalate_synth_dimer"/>
</dbReference>
<dbReference type="InterPro" id="IPR002034">
    <property type="entry name" value="AIPM/Hcit_synth_CS"/>
</dbReference>
<dbReference type="InterPro" id="IPR013785">
    <property type="entry name" value="Aldolase_TIM"/>
</dbReference>
<dbReference type="InterPro" id="IPR005668">
    <property type="entry name" value="IPM_Synthase"/>
</dbReference>
<dbReference type="InterPro" id="IPR054692">
    <property type="entry name" value="LeuA-like_post-cat"/>
</dbReference>
<dbReference type="InterPro" id="IPR036230">
    <property type="entry name" value="LeuA_allosteric_dom_sf"/>
</dbReference>
<dbReference type="InterPro" id="IPR039371">
    <property type="entry name" value="LeuA_N_DRE-TIM"/>
</dbReference>
<dbReference type="InterPro" id="IPR000891">
    <property type="entry name" value="PYR_CT"/>
</dbReference>
<dbReference type="NCBIfam" id="NF002991">
    <property type="entry name" value="PRK03739.1"/>
    <property type="match status" value="1"/>
</dbReference>
<dbReference type="PANTHER" id="PTHR46911">
    <property type="match status" value="1"/>
</dbReference>
<dbReference type="PANTHER" id="PTHR46911:SF1">
    <property type="entry name" value="2-ISOPROPYLMALATE SYNTHASE"/>
    <property type="match status" value="1"/>
</dbReference>
<dbReference type="Pfam" id="PF00682">
    <property type="entry name" value="HMGL-like"/>
    <property type="match status" value="1"/>
</dbReference>
<dbReference type="Pfam" id="PF22615">
    <property type="entry name" value="IPMS_D2"/>
    <property type="match status" value="1"/>
</dbReference>
<dbReference type="Pfam" id="PF08502">
    <property type="entry name" value="LeuA_dimer"/>
    <property type="match status" value="1"/>
</dbReference>
<dbReference type="SMART" id="SM00917">
    <property type="entry name" value="LeuA_dimer"/>
    <property type="match status" value="1"/>
</dbReference>
<dbReference type="SUPFAM" id="SSF110921">
    <property type="entry name" value="2-isopropylmalate synthase LeuA, allosteric (dimerisation) domain"/>
    <property type="match status" value="1"/>
</dbReference>
<dbReference type="SUPFAM" id="SSF51569">
    <property type="entry name" value="Aldolase"/>
    <property type="match status" value="1"/>
</dbReference>
<dbReference type="SUPFAM" id="SSF89000">
    <property type="entry name" value="post-HMGL domain-like"/>
    <property type="match status" value="1"/>
</dbReference>
<dbReference type="PROSITE" id="PS00815">
    <property type="entry name" value="AIPM_HOMOCIT_SYNTH_1"/>
    <property type="match status" value="1"/>
</dbReference>
<dbReference type="PROSITE" id="PS00816">
    <property type="entry name" value="AIPM_HOMOCIT_SYNTH_2"/>
    <property type="match status" value="1"/>
</dbReference>
<dbReference type="PROSITE" id="PS50991">
    <property type="entry name" value="PYR_CT"/>
    <property type="match status" value="1"/>
</dbReference>
<name>LEU1_HERSS</name>
<reference key="1">
    <citation type="submission" date="2010-04" db="EMBL/GenBank/DDBJ databases">
        <title>The genome of Herbaspirillum seropedicae SmR1, an endophytic, nitrogen-fixing, plant-growth promoting beta-Proteobacteria.</title>
        <authorList>
            <person name="Pedrosa F.O."/>
            <person name="Monteiro R.A."/>
            <person name="Wassem R."/>
            <person name="Cruz L.M."/>
            <person name="Ayub R.A."/>
            <person name="Colauto N.B."/>
            <person name="Fernandez M.A."/>
            <person name="Fungaro M.H.P."/>
            <person name="Grisard E.C."/>
            <person name="Hungria M."/>
            <person name="Madeira H.M.F."/>
            <person name="Nodari R.O."/>
            <person name="Osaku C.A."/>
            <person name="Petzl-Erler M.L."/>
            <person name="Terenzi H."/>
            <person name="Vieira L.G.E."/>
            <person name="Almeida M.I.M."/>
            <person name="Alves L.R."/>
            <person name="Arantes O.M.N."/>
            <person name="Balsanelli E."/>
            <person name="Barcellos F.G."/>
            <person name="Baura V.A."/>
            <person name="Binde D.R."/>
            <person name="Campo R.J."/>
            <person name="Chubatsu L.S."/>
            <person name="Chueire L.M.O."/>
            <person name="Ciferri R.R."/>
            <person name="Correa L.C."/>
            <person name="da Conceicao Silva J.L."/>
            <person name="Dabul A.N.G."/>
            <person name="Dambros B.P."/>
            <person name="Faoro H."/>
            <person name="Favetti A."/>
            <person name="Friedermann G."/>
            <person name="Furlaneto M.C."/>
            <person name="Gasques L.S."/>
            <person name="Gimenes C.C.T."/>
            <person name="Gioppo N.M.R."/>
            <person name="Glienke-Blanco C."/>
            <person name="Godoy L.P."/>
            <person name="Guerra M.P."/>
            <person name="Karp S."/>
            <person name="Kava-Cordeiro V."/>
            <person name="Margarido V.P."/>
            <person name="Mathioni S.M."/>
            <person name="Menck-Soares M.A."/>
            <person name="Murace N.K."/>
            <person name="Nicolas M.F."/>
            <person name="Oliveira C.E.C."/>
            <person name="Pagnan N.A.B."/>
            <person name="Pamphile J.A."/>
            <person name="Patussi E.V."/>
            <person name="Pereira L.F.P."/>
            <person name="Pereira-Ferrari L."/>
            <person name="Pinto F.G.S."/>
            <person name="Precoma C."/>
            <person name="Prioli A.J."/>
            <person name="Prioli S.M.A.P."/>
            <person name="Raittz R.T."/>
            <person name="Ramos H.J.O."/>
            <person name="Ribeiro E.M.S.F."/>
            <person name="Rigo L.U."/>
            <person name="Rocha C.L.M.S.C."/>
            <person name="Rocha S.N."/>
            <person name="Santos K."/>
            <person name="Satori D."/>
            <person name="Silva A.G."/>
            <person name="Simao R.C.G."/>
            <person name="Soares M.A.M."/>
            <person name="Souza E.M."/>
            <person name="Steffens M.B.R."/>
            <person name="Steindel M."/>
            <person name="Tadra-Sfeir M.Z."/>
            <person name="Takahashi E.K."/>
            <person name="Torres R.A."/>
            <person name="Valle J.S."/>
            <person name="Vernal J.I."/>
            <person name="Vilas-Boas L.A."/>
            <person name="Watanabe M.A.E."/>
            <person name="Weiss V.A."/>
            <person name="Yates M.A."/>
            <person name="Souza E.M."/>
        </authorList>
    </citation>
    <scope>NUCLEOTIDE SEQUENCE [LARGE SCALE GENOMIC DNA]</scope>
    <source>
        <strain>SmR1</strain>
    </source>
</reference>
<proteinExistence type="inferred from homology"/>
<protein>
    <recommendedName>
        <fullName evidence="1">2-isopropylmalate synthase</fullName>
        <ecNumber evidence="1">2.3.3.13</ecNumber>
    </recommendedName>
    <alternativeName>
        <fullName evidence="1">Alpha-IPM synthase</fullName>
    </alternativeName>
    <alternativeName>
        <fullName evidence="1">Alpha-isopropylmalate synthase</fullName>
    </alternativeName>
</protein>